<protein>
    <recommendedName>
        <fullName>Hemin receptor</fullName>
    </recommendedName>
</protein>
<feature type="signal peptide" evidence="1">
    <location>
        <begin position="1"/>
        <end position="28"/>
    </location>
</feature>
<feature type="chain" id="PRO_0000034758" description="Hemin receptor">
    <location>
        <begin position="29"/>
        <end position="687"/>
    </location>
</feature>
<feature type="domain" description="TBDR plug" evidence="2">
    <location>
        <begin position="56"/>
        <end position="167"/>
    </location>
</feature>
<feature type="domain" description="TBDR beta-barrel" evidence="2">
    <location>
        <begin position="178"/>
        <end position="687"/>
    </location>
</feature>
<feature type="region of interest" description="Disordered" evidence="3">
    <location>
        <begin position="319"/>
        <end position="338"/>
    </location>
</feature>
<feature type="short sequence motif" description="TonB box">
    <location>
        <begin position="44"/>
        <end position="51"/>
    </location>
</feature>
<feature type="short sequence motif" description="TonB C-terminal box">
    <location>
        <begin position="670"/>
        <end position="687"/>
    </location>
</feature>
<feature type="compositionally biased region" description="Basic and acidic residues" evidence="3">
    <location>
        <begin position="326"/>
        <end position="338"/>
    </location>
</feature>
<name>HEMR_YEREN</name>
<proteinExistence type="evidence at transcript level"/>
<gene>
    <name type="primary">hemR</name>
</gene>
<sequence length="687" mass="75226">MPRSTSDRFRWSPLSLAIACTLSLAVQAADTSSTQTNSKKRIADTMVVTATGNERSSFEAPMMVTVVEADTPTSETATSATDMLRNIPGLTVTGSGRVNGQDVTLRGYGKQGVLTLVDGIRQGTDTGHLNSTFLDPALVKRVEIVRGPSALLYGSGALGGVISYETVDAADLLLPGQNSGYRVYSAAATGDHSFGLGASAFGRTDDVDGILSFGTRDIGNIRQSDGFNAPNDETISNVLAKGTWRIDQIQSLSANLRYYNNSALEPKNPQTSAASSTNLMTDRSTIQRDAQLKYNIKPLDQEWLNATAQVYYSEVEINARPQGTPEEGRKQTTKGGKLENRTRLFTDSFASHLLTYGTEAYKQEQTPSGATESFPQADIRFGSGWLQDEITLRDLPVSILAGTRYDNYRGSSEGYADVDADKWSSRGAVSVTPTDWLMLFGSYAQAFRAPTMGEMYNDSKHFSMNIMGNTLTNYWVPNPNLKPETNETQEYGFGLRFNDLMMAEDDLQFKASYFDTNAKDYISTGVTMDFGFGPGGLYCKNCSTYSTNIDRAKIWGWDATMTYQTQWFNLGLAYNRTRGKNQNTNEWLDTINPDTVTSTLDVPVANSGFAVGWIGTFADRSSRVSSSGTPQAGYGVNDFYVSYKGQEQFKGMTTTVVLGNAFDKGYYGPQGVPQDGRNAKFFVSYQW</sequence>
<reference key="1">
    <citation type="journal article" date="1992" name="EMBO J.">
        <title>Hemin uptake system of Yersinia enterocolitica: similarities with other TonB-dependent systems in Gram-negative bacteria.</title>
        <authorList>
            <person name="Stojiljkovic I."/>
            <person name="Hantke K."/>
        </authorList>
    </citation>
    <scope>NUCLEOTIDE SEQUENCE [GENOMIC DNA]</scope>
    <source>
        <strain>ATCC 51872 / WA-C / Serotype O:8</strain>
    </source>
</reference>
<reference key="2">
    <citation type="submission" date="1998-09" db="EMBL/GenBank/DDBJ databases">
        <authorList>
            <person name="Stojiljkovic I."/>
        </authorList>
    </citation>
    <scope>SEQUENCE REVISION</scope>
</reference>
<reference key="3">
    <citation type="journal article" date="2001" name="Infect. Immun.">
        <title>Expression analysis of the yersiniabactin receptor gene fyuA and the heme receptor hemR of Yersinia enterocolitica in vitro and in vivo using the reporter genes for green fluorescent protein and luciferase.</title>
        <authorList>
            <person name="Jacobi C.A."/>
            <person name="Gregor S."/>
            <person name="Rakin A."/>
            <person name="Heesemann J."/>
        </authorList>
    </citation>
    <scope>EXPRESSION</scope>
    <source>
        <strain>ATCC 51872 / WA-C / Serotype O:8</strain>
    </source>
</reference>
<dbReference type="EMBL" id="X68147">
    <property type="protein sequence ID" value="CAA48250.1"/>
    <property type="molecule type" value="Genomic_DNA"/>
</dbReference>
<dbReference type="PIR" id="S28042">
    <property type="entry name" value="S28042"/>
</dbReference>
<dbReference type="SMR" id="P31499"/>
<dbReference type="STRING" id="1443113.LC20_04857"/>
<dbReference type="TCDB" id="1.B.14.2.2">
    <property type="family name" value="the outer membrane receptor (omr) family"/>
</dbReference>
<dbReference type="GO" id="GO:0009279">
    <property type="term" value="C:cell outer membrane"/>
    <property type="evidence" value="ECO:0007669"/>
    <property type="project" value="UniProtKB-SubCell"/>
</dbReference>
<dbReference type="GO" id="GO:0015232">
    <property type="term" value="F:heme transmembrane transporter activity"/>
    <property type="evidence" value="ECO:0007669"/>
    <property type="project" value="InterPro"/>
</dbReference>
<dbReference type="GO" id="GO:0015344">
    <property type="term" value="F:siderophore uptake transmembrane transporter activity"/>
    <property type="evidence" value="ECO:0007669"/>
    <property type="project" value="TreeGrafter"/>
</dbReference>
<dbReference type="CDD" id="cd01347">
    <property type="entry name" value="ligand_gated_channel"/>
    <property type="match status" value="1"/>
</dbReference>
<dbReference type="Gene3D" id="2.40.170.20">
    <property type="entry name" value="TonB-dependent receptor, beta-barrel domain"/>
    <property type="match status" value="1"/>
</dbReference>
<dbReference type="Gene3D" id="2.170.130.10">
    <property type="entry name" value="TonB-dependent receptor, plug domain"/>
    <property type="match status" value="1"/>
</dbReference>
<dbReference type="InterPro" id="IPR012910">
    <property type="entry name" value="Plug_dom"/>
</dbReference>
<dbReference type="InterPro" id="IPR037066">
    <property type="entry name" value="Plug_dom_sf"/>
</dbReference>
<dbReference type="InterPro" id="IPR039426">
    <property type="entry name" value="TonB-dep_rcpt-like"/>
</dbReference>
<dbReference type="InterPro" id="IPR000531">
    <property type="entry name" value="TonB-dep_rcpt_b-brl"/>
</dbReference>
<dbReference type="InterPro" id="IPR010916">
    <property type="entry name" value="TonB_box_CS"/>
</dbReference>
<dbReference type="InterPro" id="IPR011276">
    <property type="entry name" value="TonB_haem/Hb_rcpt"/>
</dbReference>
<dbReference type="InterPro" id="IPR010949">
    <property type="entry name" value="TonB_Hb/transfer/lactofer_rcpt"/>
</dbReference>
<dbReference type="InterPro" id="IPR036942">
    <property type="entry name" value="TonB_rcpt_b-brl_sf"/>
</dbReference>
<dbReference type="NCBIfam" id="TIGR01785">
    <property type="entry name" value="TonB-hemin"/>
    <property type="match status" value="1"/>
</dbReference>
<dbReference type="NCBIfam" id="TIGR01786">
    <property type="entry name" value="TonB-hemlactrns"/>
    <property type="match status" value="1"/>
</dbReference>
<dbReference type="PANTHER" id="PTHR30069:SF41">
    <property type="entry name" value="HEME_HEMOPEXIN UTILIZATION PROTEIN C"/>
    <property type="match status" value="1"/>
</dbReference>
<dbReference type="PANTHER" id="PTHR30069">
    <property type="entry name" value="TONB-DEPENDENT OUTER MEMBRANE RECEPTOR"/>
    <property type="match status" value="1"/>
</dbReference>
<dbReference type="Pfam" id="PF07715">
    <property type="entry name" value="Plug"/>
    <property type="match status" value="1"/>
</dbReference>
<dbReference type="Pfam" id="PF00593">
    <property type="entry name" value="TonB_dep_Rec_b-barrel"/>
    <property type="match status" value="1"/>
</dbReference>
<dbReference type="SUPFAM" id="SSF56935">
    <property type="entry name" value="Porins"/>
    <property type="match status" value="1"/>
</dbReference>
<dbReference type="PROSITE" id="PS00430">
    <property type="entry name" value="TONB_DEPENDENT_REC_1"/>
    <property type="match status" value="1"/>
</dbReference>
<dbReference type="PROSITE" id="PS52016">
    <property type="entry name" value="TONB_DEPENDENT_REC_3"/>
    <property type="match status" value="1"/>
</dbReference>
<evidence type="ECO:0000255" key="1"/>
<evidence type="ECO:0000255" key="2">
    <source>
        <dbReference type="PROSITE-ProRule" id="PRU01360"/>
    </source>
</evidence>
<evidence type="ECO:0000256" key="3">
    <source>
        <dbReference type="SAM" id="MobiDB-lite"/>
    </source>
</evidence>
<evidence type="ECO:0000305" key="4"/>
<accession>P31499</accession>
<organism>
    <name type="scientific">Yersinia enterocolitica</name>
    <dbReference type="NCBI Taxonomy" id="630"/>
    <lineage>
        <taxon>Bacteria</taxon>
        <taxon>Pseudomonadati</taxon>
        <taxon>Pseudomonadota</taxon>
        <taxon>Gammaproteobacteria</taxon>
        <taxon>Enterobacterales</taxon>
        <taxon>Yersiniaceae</taxon>
        <taxon>Yersinia</taxon>
    </lineage>
</organism>
<comment type="function">
    <text>This protein is involved in the initial step of iron uptake by binding hemin, an iron chelatin siderophore that allows the bacteria to extract iron from the environment.</text>
</comment>
<comment type="subcellular location">
    <subcellularLocation>
        <location evidence="2">Cell outer membrane</location>
        <topology evidence="2">Multi-pass membrane protein</topology>
    </subcellularLocation>
</comment>
<comment type="induction">
    <text>Induced in absence of iron.</text>
</comment>
<comment type="miscellaneous">
    <text>Weakly expressed by yersiniae located in the liver and the intestinal lumen. Strongly expressed in yersiniae located in the peritoneal cavity. Moderately expressed in yersiniae located in the spleen. This probably reflects the availability of iron for yersiniae.</text>
</comment>
<comment type="similarity">
    <text evidence="4">Belongs to the TonB-dependent receptor family.</text>
</comment>
<keyword id="KW-0998">Cell outer membrane</keyword>
<keyword id="KW-0406">Ion transport</keyword>
<keyword id="KW-0408">Iron</keyword>
<keyword id="KW-0410">Iron transport</keyword>
<keyword id="KW-0472">Membrane</keyword>
<keyword id="KW-0675">Receptor</keyword>
<keyword id="KW-0732">Signal</keyword>
<keyword id="KW-0798">TonB box</keyword>
<keyword id="KW-0812">Transmembrane</keyword>
<keyword id="KW-1134">Transmembrane beta strand</keyword>
<keyword id="KW-0813">Transport</keyword>